<sequence length="358" mass="40142">MININDRALIKKAIDKINKLAEKIDKLKIMHVCGSHEHTICKYGIRDVLPENITVVPGPGCPVCVTTQKEIDTAIYLADNGYVITTLGDMYRVPGSEKSLMEKQSEGCDVRIVYSISEAVKMAKKERDKKFVFVAIGFETTAPTTGAELISLKNKDVNNFFILNCHRQTPPVMEFLLNEGVYLDAFICPGHVSTITGLKPYYGLCEKYKAPMVVAGFEPIDVLMAIIMILKQVISGEAKVENEYIRAVKPEGNVLAQKIINEVFESIDVPWRGFPVVKNGGFGLREKYKKFDIYEHEDIPEIKEKIPKGCICDKILRGEKLPTDCPLFGTVCTPLNPVGSCMVSDEGTCRIFYKYRRI</sequence>
<organism>
    <name type="scientific">Methanocaldococcus jannaschii (strain ATCC 43067 / DSM 2661 / JAL-1 / JCM 10045 / NBRC 100440)</name>
    <name type="common">Methanococcus jannaschii</name>
    <dbReference type="NCBI Taxonomy" id="243232"/>
    <lineage>
        <taxon>Archaea</taxon>
        <taxon>Methanobacteriati</taxon>
        <taxon>Methanobacteriota</taxon>
        <taxon>Methanomada group</taxon>
        <taxon>Methanococci</taxon>
        <taxon>Methanococcales</taxon>
        <taxon>Methanocaldococcaceae</taxon>
        <taxon>Methanocaldococcus</taxon>
    </lineage>
</organism>
<comment type="similarity">
    <text evidence="2">Belongs to the HypD family.</text>
</comment>
<reference key="1">
    <citation type="journal article" date="1996" name="Science">
        <title>Complete genome sequence of the methanogenic archaeon, Methanococcus jannaschii.</title>
        <authorList>
            <person name="Bult C.J."/>
            <person name="White O."/>
            <person name="Olsen G.J."/>
            <person name="Zhou L."/>
            <person name="Fleischmann R.D."/>
            <person name="Sutton G.G."/>
            <person name="Blake J.A."/>
            <person name="FitzGerald L.M."/>
            <person name="Clayton R.A."/>
            <person name="Gocayne J.D."/>
            <person name="Kerlavage A.R."/>
            <person name="Dougherty B.A."/>
            <person name="Tomb J.-F."/>
            <person name="Adams M.D."/>
            <person name="Reich C.I."/>
            <person name="Overbeek R."/>
            <person name="Kirkness E.F."/>
            <person name="Weinstock K.G."/>
            <person name="Merrick J.M."/>
            <person name="Glodek A."/>
            <person name="Scott J.L."/>
            <person name="Geoghagen N.S.M."/>
            <person name="Weidman J.F."/>
            <person name="Fuhrmann J.L."/>
            <person name="Nguyen D."/>
            <person name="Utterback T.R."/>
            <person name="Kelley J.M."/>
            <person name="Peterson J.D."/>
            <person name="Sadow P.W."/>
            <person name="Hanna M.C."/>
            <person name="Cotton M.D."/>
            <person name="Roberts K.M."/>
            <person name="Hurst M.A."/>
            <person name="Kaine B.P."/>
            <person name="Borodovsky M."/>
            <person name="Klenk H.-P."/>
            <person name="Fraser C.M."/>
            <person name="Smith H.O."/>
            <person name="Woese C.R."/>
            <person name="Venter J.C."/>
        </authorList>
    </citation>
    <scope>NUCLEOTIDE SEQUENCE [LARGE SCALE GENOMIC DNA]</scope>
    <source>
        <strain>ATCC 43067 / DSM 2661 / JAL-1 / JCM 10045 / NBRC 100440</strain>
    </source>
</reference>
<proteinExistence type="inferred from homology"/>
<name>Y993_METJA</name>
<feature type="chain" id="PRO_0000201454" description="Putative hydrogenase expression/formation protein MJ0993">
    <location>
        <begin position="1"/>
        <end position="358"/>
    </location>
</feature>
<feature type="binding site" evidence="1">
    <location>
        <position position="33"/>
    </location>
    <ligand>
        <name>Fe cation</name>
        <dbReference type="ChEBI" id="CHEBI:24875"/>
    </ligand>
</feature>
<feature type="binding site" evidence="1">
    <location>
        <position position="61"/>
    </location>
    <ligand>
        <name>Fe cation</name>
        <dbReference type="ChEBI" id="CHEBI:24875"/>
    </ligand>
</feature>
<feature type="binding site" evidence="1">
    <location>
        <position position="64"/>
    </location>
    <ligand>
        <name>Fe cation</name>
        <dbReference type="ChEBI" id="CHEBI:24875"/>
    </ligand>
</feature>
<dbReference type="EMBL" id="L77117">
    <property type="protein sequence ID" value="AAB98998.1"/>
    <property type="molecule type" value="Genomic_DNA"/>
</dbReference>
<dbReference type="PIR" id="A64424">
    <property type="entry name" value="A64424"/>
</dbReference>
<dbReference type="RefSeq" id="WP_010870507.1">
    <property type="nucleotide sequence ID" value="NC_000909.1"/>
</dbReference>
<dbReference type="SMR" id="Q58400"/>
<dbReference type="FunCoup" id="Q58400">
    <property type="interactions" value="3"/>
</dbReference>
<dbReference type="STRING" id="243232.MJ_0993"/>
<dbReference type="PaxDb" id="243232-MJ_0993"/>
<dbReference type="EnsemblBacteria" id="AAB98998">
    <property type="protein sequence ID" value="AAB98998"/>
    <property type="gene ID" value="MJ_0993"/>
</dbReference>
<dbReference type="GeneID" id="1451891"/>
<dbReference type="KEGG" id="mja:MJ_0993"/>
<dbReference type="eggNOG" id="arCOG04428">
    <property type="taxonomic scope" value="Archaea"/>
</dbReference>
<dbReference type="HOGENOM" id="CLU_048562_1_0_2"/>
<dbReference type="InParanoid" id="Q58400"/>
<dbReference type="OrthoDB" id="372075at2157"/>
<dbReference type="PhylomeDB" id="Q58400"/>
<dbReference type="Proteomes" id="UP000000805">
    <property type="component" value="Chromosome"/>
</dbReference>
<dbReference type="GO" id="GO:0051539">
    <property type="term" value="F:4 iron, 4 sulfur cluster binding"/>
    <property type="evidence" value="ECO:0000318"/>
    <property type="project" value="GO_Central"/>
</dbReference>
<dbReference type="GO" id="GO:0070025">
    <property type="term" value="F:carbon monoxide binding"/>
    <property type="evidence" value="ECO:0000318"/>
    <property type="project" value="GO_Central"/>
</dbReference>
<dbReference type="GO" id="GO:0005506">
    <property type="term" value="F:iron ion binding"/>
    <property type="evidence" value="ECO:0000318"/>
    <property type="project" value="GO_Central"/>
</dbReference>
<dbReference type="GO" id="GO:0051604">
    <property type="term" value="P:protein maturation"/>
    <property type="evidence" value="ECO:0000318"/>
    <property type="project" value="GO_Central"/>
</dbReference>
<dbReference type="Gene3D" id="6.10.20.100">
    <property type="match status" value="1"/>
</dbReference>
<dbReference type="Gene3D" id="3.40.50.11750">
    <property type="entry name" value="HypD, alpha/beta domain 1"/>
    <property type="match status" value="2"/>
</dbReference>
<dbReference type="InterPro" id="IPR002780">
    <property type="entry name" value="Hyd_form_HypD"/>
</dbReference>
<dbReference type="InterPro" id="IPR042243">
    <property type="entry name" value="HypD_1"/>
</dbReference>
<dbReference type="InterPro" id="IPR042244">
    <property type="entry name" value="HypD_2_sf"/>
</dbReference>
<dbReference type="NCBIfam" id="TIGR00075">
    <property type="entry name" value="hypD"/>
    <property type="match status" value="1"/>
</dbReference>
<dbReference type="PANTHER" id="PTHR30149:SF0">
    <property type="entry name" value="HYDROGENASE MATURATION FACTOR HYPD"/>
    <property type="match status" value="1"/>
</dbReference>
<dbReference type="PANTHER" id="PTHR30149">
    <property type="entry name" value="HYDROGENASE PROTEIN ASSEMBLY PROTEIN HYPD"/>
    <property type="match status" value="1"/>
</dbReference>
<dbReference type="Pfam" id="PF01924">
    <property type="entry name" value="HypD"/>
    <property type="match status" value="1"/>
</dbReference>
<dbReference type="PIRSF" id="PIRSF005622">
    <property type="entry name" value="Hydrgn_mat_hypD"/>
    <property type="match status" value="1"/>
</dbReference>
<gene>
    <name type="ordered locus">MJ0993</name>
</gene>
<protein>
    <recommendedName>
        <fullName>Putative hydrogenase expression/formation protein MJ0993</fullName>
    </recommendedName>
</protein>
<evidence type="ECO:0000250" key="1">
    <source>
        <dbReference type="UniProtKB" id="P24192"/>
    </source>
</evidence>
<evidence type="ECO:0000305" key="2"/>
<accession>Q58400</accession>
<keyword id="KW-0408">Iron</keyword>
<keyword id="KW-0479">Metal-binding</keyword>
<keyword id="KW-1185">Reference proteome</keyword>